<keyword id="KW-0131">Cell cycle</keyword>
<keyword id="KW-0132">Cell division</keyword>
<keyword id="KW-0143">Chaperone</keyword>
<keyword id="KW-0963">Cytoplasm</keyword>
<keyword id="KW-0413">Isomerase</keyword>
<keyword id="KW-1185">Reference proteome</keyword>
<keyword id="KW-0697">Rotamase</keyword>
<sequence length="438" mass="49153">MEYNVEDLSPVKKKITITVPVEEVNAALAATIAVYQTSVNLSGFRKGKVPASIIEGRFRKEVYNEATQDLVNVHINEVVGSLDTQPASRIDFDGGQLERDKEFVYTISFEVMPVFEMPDYDGMEVEQEKPEVDENEVNAVLERIRTNLADVVTVAEHRPAKDGEIAVLDFAAYENGEPIAGVAADNFELNLGGNQALVDFEELVKRAVPGEATEGDVTFPEDFINPEFAGKTVTMKVTVHAVKERKLPELDDELAKKAGGFESFDKMRETVEQSYLESRTQLCKAQAQKTMVDSLLKTLDFPVPESMLEMYMDSLLAEKKDRLERQGKSLESLGKSPEELRDEVRPEAEHIARTQIFLVKAAQKEGVTVSEQEVDRQLQQIAMRSGQDFQTMKEHYTRTNMIFNLRDRMLADKAMEAIYEKAAIKEVPAKKEAAEAAE</sequence>
<evidence type="ECO:0000255" key="1">
    <source>
        <dbReference type="HAMAP-Rule" id="MF_00303"/>
    </source>
</evidence>
<comment type="function">
    <text evidence="1">Involved in protein export. Acts as a chaperone by maintaining the newly synthesized protein in an open conformation. Functions as a peptidyl-prolyl cis-trans isomerase.</text>
</comment>
<comment type="catalytic activity">
    <reaction evidence="1">
        <text>[protein]-peptidylproline (omega=180) = [protein]-peptidylproline (omega=0)</text>
        <dbReference type="Rhea" id="RHEA:16237"/>
        <dbReference type="Rhea" id="RHEA-COMP:10747"/>
        <dbReference type="Rhea" id="RHEA-COMP:10748"/>
        <dbReference type="ChEBI" id="CHEBI:83833"/>
        <dbReference type="ChEBI" id="CHEBI:83834"/>
        <dbReference type="EC" id="5.2.1.8"/>
    </reaction>
</comment>
<comment type="subcellular location">
    <subcellularLocation>
        <location>Cytoplasm</location>
    </subcellularLocation>
    <text evidence="1">About half TF is bound to the ribosome near the polypeptide exit tunnel while the other half is free in the cytoplasm.</text>
</comment>
<comment type="domain">
    <text evidence="1">Consists of 3 domains; the N-terminus binds the ribosome, the middle domain has PPIase activity, while the C-terminus has intrinsic chaperone activity on its own.</text>
</comment>
<comment type="similarity">
    <text evidence="1">Belongs to the FKBP-type PPIase family. Tig subfamily.</text>
</comment>
<organism>
    <name type="scientific">Oleidesulfovibrio alaskensis (strain ATCC BAA-1058 / DSM 17464 / G20)</name>
    <name type="common">Desulfovibrio alaskensis</name>
    <dbReference type="NCBI Taxonomy" id="207559"/>
    <lineage>
        <taxon>Bacteria</taxon>
        <taxon>Pseudomonadati</taxon>
        <taxon>Thermodesulfobacteriota</taxon>
        <taxon>Desulfovibrionia</taxon>
        <taxon>Desulfovibrionales</taxon>
        <taxon>Desulfovibrionaceae</taxon>
        <taxon>Oleidesulfovibrio</taxon>
    </lineage>
</organism>
<feature type="chain" id="PRO_0000256555" description="Trigger factor">
    <location>
        <begin position="1"/>
        <end position="438"/>
    </location>
</feature>
<feature type="domain" description="PPIase FKBP-type" evidence="1">
    <location>
        <begin position="163"/>
        <end position="248"/>
    </location>
</feature>
<accession>Q30Z77</accession>
<reference key="1">
    <citation type="journal article" date="2011" name="J. Bacteriol.">
        <title>Complete genome sequence and updated annotation of Desulfovibrio alaskensis G20.</title>
        <authorList>
            <person name="Hauser L.J."/>
            <person name="Land M.L."/>
            <person name="Brown S.D."/>
            <person name="Larimer F."/>
            <person name="Keller K.L."/>
            <person name="Rapp-Giles B.J."/>
            <person name="Price M.N."/>
            <person name="Lin M."/>
            <person name="Bruce D.C."/>
            <person name="Detter J.C."/>
            <person name="Tapia R."/>
            <person name="Han C.S."/>
            <person name="Goodwin L.A."/>
            <person name="Cheng J.F."/>
            <person name="Pitluck S."/>
            <person name="Copeland A."/>
            <person name="Lucas S."/>
            <person name="Nolan M."/>
            <person name="Lapidus A.L."/>
            <person name="Palumbo A.V."/>
            <person name="Wall J.D."/>
        </authorList>
    </citation>
    <scope>NUCLEOTIDE SEQUENCE [LARGE SCALE GENOMIC DNA]</scope>
    <source>
        <strain>ATCC BAA-1058 / DSM 17464 / G20</strain>
    </source>
</reference>
<protein>
    <recommendedName>
        <fullName evidence="1">Trigger factor</fullName>
        <shortName evidence="1">TF</shortName>
        <ecNumber evidence="1">5.2.1.8</ecNumber>
    </recommendedName>
    <alternativeName>
        <fullName evidence="1">PPIase</fullName>
    </alternativeName>
</protein>
<dbReference type="EC" id="5.2.1.8" evidence="1"/>
<dbReference type="EMBL" id="CP000112">
    <property type="protein sequence ID" value="ABB39019.1"/>
    <property type="molecule type" value="Genomic_DNA"/>
</dbReference>
<dbReference type="RefSeq" id="WP_011368113.1">
    <property type="nucleotide sequence ID" value="NC_007519.1"/>
</dbReference>
<dbReference type="SMR" id="Q30Z77"/>
<dbReference type="STRING" id="207559.Dde_2222"/>
<dbReference type="KEGG" id="dde:Dde_2222"/>
<dbReference type="eggNOG" id="COG0544">
    <property type="taxonomic scope" value="Bacteria"/>
</dbReference>
<dbReference type="HOGENOM" id="CLU_033058_3_1_7"/>
<dbReference type="Proteomes" id="UP000002710">
    <property type="component" value="Chromosome"/>
</dbReference>
<dbReference type="GO" id="GO:0005737">
    <property type="term" value="C:cytoplasm"/>
    <property type="evidence" value="ECO:0007669"/>
    <property type="project" value="UniProtKB-SubCell"/>
</dbReference>
<dbReference type="GO" id="GO:0003755">
    <property type="term" value="F:peptidyl-prolyl cis-trans isomerase activity"/>
    <property type="evidence" value="ECO:0007669"/>
    <property type="project" value="UniProtKB-UniRule"/>
</dbReference>
<dbReference type="GO" id="GO:0044183">
    <property type="term" value="F:protein folding chaperone"/>
    <property type="evidence" value="ECO:0007669"/>
    <property type="project" value="TreeGrafter"/>
</dbReference>
<dbReference type="GO" id="GO:0043022">
    <property type="term" value="F:ribosome binding"/>
    <property type="evidence" value="ECO:0007669"/>
    <property type="project" value="TreeGrafter"/>
</dbReference>
<dbReference type="GO" id="GO:0051083">
    <property type="term" value="P:'de novo' cotranslational protein folding"/>
    <property type="evidence" value="ECO:0007669"/>
    <property type="project" value="TreeGrafter"/>
</dbReference>
<dbReference type="GO" id="GO:0051301">
    <property type="term" value="P:cell division"/>
    <property type="evidence" value="ECO:0007669"/>
    <property type="project" value="UniProtKB-KW"/>
</dbReference>
<dbReference type="GO" id="GO:0061077">
    <property type="term" value="P:chaperone-mediated protein folding"/>
    <property type="evidence" value="ECO:0007669"/>
    <property type="project" value="TreeGrafter"/>
</dbReference>
<dbReference type="GO" id="GO:0015031">
    <property type="term" value="P:protein transport"/>
    <property type="evidence" value="ECO:0007669"/>
    <property type="project" value="UniProtKB-UniRule"/>
</dbReference>
<dbReference type="GO" id="GO:0043335">
    <property type="term" value="P:protein unfolding"/>
    <property type="evidence" value="ECO:0007669"/>
    <property type="project" value="TreeGrafter"/>
</dbReference>
<dbReference type="Gene3D" id="3.10.50.40">
    <property type="match status" value="1"/>
</dbReference>
<dbReference type="Gene3D" id="3.30.70.1050">
    <property type="entry name" value="Trigger factor ribosome-binding domain"/>
    <property type="match status" value="1"/>
</dbReference>
<dbReference type="Gene3D" id="1.10.3120.10">
    <property type="entry name" value="Trigger factor, C-terminal domain"/>
    <property type="match status" value="1"/>
</dbReference>
<dbReference type="HAMAP" id="MF_00303">
    <property type="entry name" value="Trigger_factor_Tig"/>
    <property type="match status" value="1"/>
</dbReference>
<dbReference type="InterPro" id="IPR046357">
    <property type="entry name" value="PPIase_dom_sf"/>
</dbReference>
<dbReference type="InterPro" id="IPR005215">
    <property type="entry name" value="Trig_fac"/>
</dbReference>
<dbReference type="InterPro" id="IPR008880">
    <property type="entry name" value="Trigger_fac_C"/>
</dbReference>
<dbReference type="InterPro" id="IPR037041">
    <property type="entry name" value="Trigger_fac_C_sf"/>
</dbReference>
<dbReference type="InterPro" id="IPR008881">
    <property type="entry name" value="Trigger_fac_ribosome-bd_bac"/>
</dbReference>
<dbReference type="InterPro" id="IPR036611">
    <property type="entry name" value="Trigger_fac_ribosome-bd_sf"/>
</dbReference>
<dbReference type="InterPro" id="IPR027304">
    <property type="entry name" value="Trigger_fact/SurA_dom_sf"/>
</dbReference>
<dbReference type="NCBIfam" id="TIGR00115">
    <property type="entry name" value="tig"/>
    <property type="match status" value="1"/>
</dbReference>
<dbReference type="PANTHER" id="PTHR30560">
    <property type="entry name" value="TRIGGER FACTOR CHAPERONE AND PEPTIDYL-PROLYL CIS/TRANS ISOMERASE"/>
    <property type="match status" value="1"/>
</dbReference>
<dbReference type="PANTHER" id="PTHR30560:SF3">
    <property type="entry name" value="TRIGGER FACTOR-LIKE PROTEIN TIG, CHLOROPLASTIC"/>
    <property type="match status" value="1"/>
</dbReference>
<dbReference type="Pfam" id="PF05698">
    <property type="entry name" value="Trigger_C"/>
    <property type="match status" value="1"/>
</dbReference>
<dbReference type="Pfam" id="PF05697">
    <property type="entry name" value="Trigger_N"/>
    <property type="match status" value="1"/>
</dbReference>
<dbReference type="PIRSF" id="PIRSF003095">
    <property type="entry name" value="Trigger_factor"/>
    <property type="match status" value="1"/>
</dbReference>
<dbReference type="SUPFAM" id="SSF54534">
    <property type="entry name" value="FKBP-like"/>
    <property type="match status" value="1"/>
</dbReference>
<dbReference type="SUPFAM" id="SSF109998">
    <property type="entry name" value="Triger factor/SurA peptide-binding domain-like"/>
    <property type="match status" value="1"/>
</dbReference>
<dbReference type="SUPFAM" id="SSF102735">
    <property type="entry name" value="Trigger factor ribosome-binding domain"/>
    <property type="match status" value="1"/>
</dbReference>
<proteinExistence type="inferred from homology"/>
<name>TIG_OLEA2</name>
<gene>
    <name evidence="1" type="primary">tig</name>
    <name type="ordered locus">Dde_2222</name>
</gene>